<proteinExistence type="inferred from homology"/>
<organism>
    <name type="scientific">Drosophila virilis</name>
    <name type="common">Fruit fly</name>
    <dbReference type="NCBI Taxonomy" id="7244"/>
    <lineage>
        <taxon>Eukaryota</taxon>
        <taxon>Metazoa</taxon>
        <taxon>Ecdysozoa</taxon>
        <taxon>Arthropoda</taxon>
        <taxon>Hexapoda</taxon>
        <taxon>Insecta</taxon>
        <taxon>Pterygota</taxon>
        <taxon>Neoptera</taxon>
        <taxon>Endopterygota</taxon>
        <taxon>Diptera</taxon>
        <taxon>Brachycera</taxon>
        <taxon>Muscomorpha</taxon>
        <taxon>Ephydroidea</taxon>
        <taxon>Drosophilidae</taxon>
        <taxon>Drosophila</taxon>
    </lineage>
</organism>
<keyword id="KW-0131">Cell cycle</keyword>
<keyword id="KW-0132">Cell division</keyword>
<keyword id="KW-0159">Chromosome partition</keyword>
<keyword id="KW-0498">Mitosis</keyword>
<keyword id="KW-0539">Nucleus</keyword>
<keyword id="KW-1185">Reference proteome</keyword>
<keyword id="KW-0677">Repeat</keyword>
<keyword id="KW-0802">TPR repeat</keyword>
<gene>
    <name type="ORF">GJ10962</name>
</gene>
<protein>
    <recommendedName>
        <fullName>MAU2 chromatid cohesion factor homolog</fullName>
    </recommendedName>
    <alternativeName>
        <fullName>Cohesin loading complex subunit SCC4 homolog</fullName>
    </alternativeName>
</protein>
<reference key="1">
    <citation type="journal article" date="2007" name="Nature">
        <title>Evolution of genes and genomes on the Drosophila phylogeny.</title>
        <authorList>
            <consortium name="Drosophila 12 genomes consortium"/>
        </authorList>
    </citation>
    <scope>NUCLEOTIDE SEQUENCE [LARGE SCALE GENOMIC DNA]</scope>
    <source>
        <strain>Tucson 15010-1051.87</strain>
    </source>
</reference>
<comment type="function">
    <text evidence="1">Required for association of the cohesin complex with chromatin during interphase. Plays a role in sister chromatid cohesion and normal progression through prometaphase (By similarity).</text>
</comment>
<comment type="subunit">
    <text evidence="1">Interacts with Nipped-B to form the cohesin loading complex.</text>
</comment>
<comment type="subcellular location">
    <subcellularLocation>
        <location evidence="1">Nucleus</location>
        <location evidence="1">Nucleoplasm</location>
    </subcellularLocation>
    <text evidence="1">Binds to chromatin from the end of mitosis until prophase.</text>
</comment>
<comment type="similarity">
    <text evidence="2">Belongs to the SCC4/mau-2 family.</text>
</comment>
<dbReference type="EMBL" id="CH940652">
    <property type="protein sequence ID" value="EDW59575.1"/>
    <property type="molecule type" value="Genomic_DNA"/>
</dbReference>
<dbReference type="SMR" id="B4M4L4"/>
<dbReference type="FunCoup" id="B4M4L4">
    <property type="interactions" value="2764"/>
</dbReference>
<dbReference type="STRING" id="7244.B4M4L4"/>
<dbReference type="EnsemblMetazoa" id="FBtr0226887">
    <property type="protein sequence ID" value="FBpp0225379"/>
    <property type="gene ID" value="FBgn0198230"/>
</dbReference>
<dbReference type="EnsemblMetazoa" id="XM_002056427.3">
    <property type="protein sequence ID" value="XP_002056463.1"/>
    <property type="gene ID" value="LOC6632657"/>
</dbReference>
<dbReference type="GeneID" id="6632657"/>
<dbReference type="KEGG" id="dvi:6632657"/>
<dbReference type="CTD" id="23383"/>
<dbReference type="eggNOG" id="KOG2300">
    <property type="taxonomic scope" value="Eukaryota"/>
</dbReference>
<dbReference type="HOGENOM" id="CLU_030238_0_0_1"/>
<dbReference type="InParanoid" id="B4M4L4"/>
<dbReference type="OMA" id="QDAWYLS"/>
<dbReference type="OrthoDB" id="5565328at2759"/>
<dbReference type="PhylomeDB" id="B4M4L4"/>
<dbReference type="Proteomes" id="UP000008792">
    <property type="component" value="Unassembled WGS sequence"/>
</dbReference>
<dbReference type="GO" id="GO:0000785">
    <property type="term" value="C:chromatin"/>
    <property type="evidence" value="ECO:0000250"/>
    <property type="project" value="UniProtKB"/>
</dbReference>
<dbReference type="GO" id="GO:0005654">
    <property type="term" value="C:nucleoplasm"/>
    <property type="evidence" value="ECO:0000250"/>
    <property type="project" value="UniProtKB"/>
</dbReference>
<dbReference type="GO" id="GO:0005634">
    <property type="term" value="C:nucleus"/>
    <property type="evidence" value="ECO:0000250"/>
    <property type="project" value="UniProtKB"/>
</dbReference>
<dbReference type="GO" id="GO:0032116">
    <property type="term" value="C:SMC loading complex"/>
    <property type="evidence" value="ECO:0000250"/>
    <property type="project" value="UniProtKB"/>
</dbReference>
<dbReference type="GO" id="GO:0051301">
    <property type="term" value="P:cell division"/>
    <property type="evidence" value="ECO:0007669"/>
    <property type="project" value="UniProtKB-KW"/>
</dbReference>
<dbReference type="GO" id="GO:0007059">
    <property type="term" value="P:chromosome segregation"/>
    <property type="evidence" value="ECO:0007669"/>
    <property type="project" value="UniProtKB-KW"/>
</dbReference>
<dbReference type="GO" id="GO:0034088">
    <property type="term" value="P:maintenance of mitotic sister chromatid cohesion"/>
    <property type="evidence" value="ECO:0000250"/>
    <property type="project" value="UniProtKB"/>
</dbReference>
<dbReference type="FunFam" id="1.25.40.10:FF:000373">
    <property type="entry name" value="MAU2 chromatid cohesion factor homolog"/>
    <property type="match status" value="1"/>
</dbReference>
<dbReference type="FunFam" id="1.25.40.10:FF:000915">
    <property type="entry name" value="MAU2 chromatid cohesion factor homolog"/>
    <property type="match status" value="1"/>
</dbReference>
<dbReference type="Gene3D" id="1.25.40.10">
    <property type="entry name" value="Tetratricopeptide repeat domain"/>
    <property type="match status" value="2"/>
</dbReference>
<dbReference type="InterPro" id="IPR019440">
    <property type="entry name" value="MAU2"/>
</dbReference>
<dbReference type="InterPro" id="IPR011990">
    <property type="entry name" value="TPR-like_helical_dom_sf"/>
</dbReference>
<dbReference type="PANTHER" id="PTHR21394">
    <property type="entry name" value="MAU2 CHROMATID COHESION FACTOR HOMOLOG"/>
    <property type="match status" value="1"/>
</dbReference>
<dbReference type="Pfam" id="PF10345">
    <property type="entry name" value="Cohesin_load"/>
    <property type="match status" value="1"/>
</dbReference>
<dbReference type="SUPFAM" id="SSF48452">
    <property type="entry name" value="TPR-like"/>
    <property type="match status" value="1"/>
</dbReference>
<feature type="chain" id="PRO_0000382738" description="MAU2 chromatid cohesion factor homolog">
    <location>
        <begin position="1"/>
        <end position="621"/>
    </location>
</feature>
<feature type="repeat" description="TPR 1">
    <location>
        <begin position="96"/>
        <end position="129"/>
    </location>
</feature>
<feature type="repeat" description="TPR 2">
    <location>
        <begin position="451"/>
        <end position="484"/>
    </location>
</feature>
<feature type="repeat" description="TPR 3">
    <location>
        <begin position="491"/>
        <end position="524"/>
    </location>
</feature>
<name>SCC4_DROVI</name>
<accession>B4M4L4</accession>
<evidence type="ECO:0000250" key="1"/>
<evidence type="ECO:0000305" key="2"/>
<sequence>MSGVNTTAASQDACYISLLGLAEYFRTSQPPNIKKCIQCLQALFTFQPPSKVEARTHLQMGQVLMAYTRNIDLARQHLEQAWSISEPLMNFDDVKFDTASLLAQLHLQTEQSSHAKAMLRRAVELSQNNVYWHCKLLLQLSQIHANDREYSLASDLLAVGAESAEEAGATYLKVLFLLSRAMILMIERKTNDVLALLNSAGQIIDNNIPNPHQKEYLKVFFLVLQVCYYLALGQVKTVKPSLKQLQMSIQTIMAPNWPSDEVIFGANQLEMFVWLPKEQLYVLVYLVTVSHSMMAGYMDKAQKYTEKALTQIEKLKLQEDKSILSVFKVILLEHIVMCRMVMGNRELAIREIAAARDVCIAAPHRNLLKRHSAQLHCLIGLYSMSTSFFEHAERQFLVCVNETGERDLKLFANLNLAIIYLRTKREADLKQILDAVSTENTHTYSSQALMGGFYYVQGLHAFHKNSFHEAKRFLRETLKMANAEDLNRLTSCSLVLLSHVFLSIGNSKESMNMVTPAMQLASKIPDIHVQLWGSAILKDLHRMSKDAQHEKEAYANHVKYSENLIADQRKCVQSAHHELVNWFQGDPPVTSGASLNLPVAVATTEASTSAIQQPAQFGQFY</sequence>